<proteinExistence type="evidence at transcript level"/>
<name>C19L2_DANRE</name>
<sequence>MAAYGVNFESANSIKSRKESKREERERVIQKAKEKFEKEERRKAERKARGEDTWMLPDVDLRLQQIGEEHTVKTKKAKKEKKAKKSKKEKKKKAKKEKKDEGDASCDSSEDSEDEWVEATLPSGGKDKSLEGEPEATPSSSSASNNQRDEWMTFDFLAMKTTSVADRRAQKEAEKEAERQKAQAIEQAGLHRLELNPYWKDGGSGLPPEESSSTAVKKAGVVNDGGVSWLRKSYQRMKEQADREQRSLDSVVAERYGSMEEFQKRLKEAEDAAYGERRDDEKERGRREEGKESWRRNDREEGRERWRRDEEKDRWRRNDRDEGRERWRREDGDEEKERWRKDGWRRGENEDRRRERSPNAERERARSRDDLSSKFLKPSEDEEVSRGAGFKKGSSSNQSAAFRKPVDDVEMSREAGFKKGSSSNQNAAFRKPVDDEMSRGTAFKKGSSSNQSAAFRKPVDGDHDDDEMSRGAEFRKSSSSNQSAAFRKPIDNNNDGRGVAAAWRKSSAVQDSETPTLQKHTEKSAALQEDSKTTTTVSSSESEEEEEEELILTDEEMNKLGAKIVKAEIMGNTALLEKLRAQMEAARRAKEKRAQIKDQSKRASKPAVSEKEVLLFRTDPSGRAWPVNAPSETLEPRGGRRKRKAIETHQDGERVRYFDDDDGVDLREMVRREKMSSAEDQNALYSRMAAKMMGRTDGDNYTLDDMFVSSAAQKERAGRDEERQRNKAVQETRRLAGRMEKCPHCFDSAELPKHLIIAVGTKVYLCLPNSVSLTEGHCLIVPVQHHTAATGLDEDIWGEIQMFRRALVRMFESQELDCVFLETHMNPKRHLHMVYECVPMPRELGDMAPIYFKKAIMESDEEWAMNKKVVDLSKRDIRQAVPRGLPYFSVDFGLQGGFAHVIENEQKFPHYFGKEILGGMLDLEPRRWRKPIRENFDDQRKKVLKFAQWWKPFDCTKSDS</sequence>
<feature type="chain" id="PRO_0000315650" description="CWF19-like protein 2">
    <location>
        <begin position="1"/>
        <end position="960"/>
    </location>
</feature>
<feature type="region of interest" description="Disordered" evidence="2">
    <location>
        <begin position="1"/>
        <end position="222"/>
    </location>
</feature>
<feature type="region of interest" description="Disordered" evidence="2">
    <location>
        <begin position="261"/>
        <end position="552"/>
    </location>
</feature>
<feature type="region of interest" description="Disordered" evidence="2">
    <location>
        <begin position="624"/>
        <end position="648"/>
    </location>
</feature>
<feature type="region of interest" description="Disordered" evidence="2">
    <location>
        <begin position="712"/>
        <end position="731"/>
    </location>
</feature>
<feature type="coiled-coil region" evidence="1">
    <location>
        <begin position="13"/>
        <end position="101"/>
    </location>
</feature>
<feature type="coiled-coil region" evidence="1">
    <location>
        <begin position="163"/>
        <end position="279"/>
    </location>
</feature>
<feature type="coiled-coil region" evidence="1">
    <location>
        <begin position="540"/>
        <end position="605"/>
    </location>
</feature>
<feature type="compositionally biased region" description="Basic and acidic residues" evidence="2">
    <location>
        <begin position="16"/>
        <end position="52"/>
    </location>
</feature>
<feature type="compositionally biased region" description="Basic residues" evidence="2">
    <location>
        <begin position="73"/>
        <end position="96"/>
    </location>
</feature>
<feature type="compositionally biased region" description="Acidic residues" evidence="2">
    <location>
        <begin position="108"/>
        <end position="117"/>
    </location>
</feature>
<feature type="compositionally biased region" description="Low complexity" evidence="2">
    <location>
        <begin position="135"/>
        <end position="146"/>
    </location>
</feature>
<feature type="compositionally biased region" description="Basic and acidic residues" evidence="2">
    <location>
        <begin position="165"/>
        <end position="181"/>
    </location>
</feature>
<feature type="compositionally biased region" description="Basic and acidic residues" evidence="2">
    <location>
        <begin position="261"/>
        <end position="372"/>
    </location>
</feature>
<feature type="compositionally biased region" description="Basic and acidic residues" evidence="2">
    <location>
        <begin position="404"/>
        <end position="417"/>
    </location>
</feature>
<feature type="compositionally biased region" description="Polar residues" evidence="2">
    <location>
        <begin position="507"/>
        <end position="518"/>
    </location>
</feature>
<feature type="compositionally biased region" description="Acidic residues" evidence="2">
    <location>
        <begin position="541"/>
        <end position="552"/>
    </location>
</feature>
<feature type="compositionally biased region" description="Basic and acidic residues" evidence="2">
    <location>
        <begin position="713"/>
        <end position="731"/>
    </location>
</feature>
<gene>
    <name type="primary">cwf19l2</name>
</gene>
<accession>Q3LSS0</accession>
<comment type="similarity">
    <text evidence="3">Belongs to the CWF19 family.</text>
</comment>
<protein>
    <recommendedName>
        <fullName>CWF19-like protein 2</fullName>
    </recommendedName>
</protein>
<dbReference type="EMBL" id="DQ181569">
    <property type="protein sequence ID" value="ABA19230.1"/>
    <property type="molecule type" value="mRNA"/>
</dbReference>
<dbReference type="SMR" id="Q3LSS0"/>
<dbReference type="FunCoup" id="Q3LSS0">
    <property type="interactions" value="965"/>
</dbReference>
<dbReference type="STRING" id="7955.ENSDARP00000130142"/>
<dbReference type="PaxDb" id="7955-ENSDARP00000108599"/>
<dbReference type="AGR" id="ZFIN:ZDB-GENE-050913-1"/>
<dbReference type="ZFIN" id="ZDB-GENE-050913-1">
    <property type="gene designation" value="cwf19l2"/>
</dbReference>
<dbReference type="eggNOG" id="KOG2477">
    <property type="taxonomic scope" value="Eukaryota"/>
</dbReference>
<dbReference type="InParanoid" id="Q3LSS0"/>
<dbReference type="OrthoDB" id="2113965at2759"/>
<dbReference type="PRO" id="PR:Q3LSS0"/>
<dbReference type="Proteomes" id="UP000000437">
    <property type="component" value="Unplaced"/>
</dbReference>
<dbReference type="GO" id="GO:0071014">
    <property type="term" value="C:post-mRNA release spliceosomal complex"/>
    <property type="evidence" value="ECO:0000318"/>
    <property type="project" value="GO_Central"/>
</dbReference>
<dbReference type="GO" id="GO:0000398">
    <property type="term" value="P:mRNA splicing, via spliceosome"/>
    <property type="evidence" value="ECO:0000318"/>
    <property type="project" value="GO_Central"/>
</dbReference>
<dbReference type="FunFam" id="3.30.428.10:FF:000021">
    <property type="entry name" value="CWF19-like protein 2 homolog"/>
    <property type="match status" value="1"/>
</dbReference>
<dbReference type="Gene3D" id="3.30.428.10">
    <property type="entry name" value="HIT-like"/>
    <property type="match status" value="1"/>
</dbReference>
<dbReference type="InterPro" id="IPR040194">
    <property type="entry name" value="Cwf19-like"/>
</dbReference>
<dbReference type="InterPro" id="IPR006768">
    <property type="entry name" value="Cwf19-like_C_dom-1"/>
</dbReference>
<dbReference type="InterPro" id="IPR006767">
    <property type="entry name" value="Cwf19-like_C_dom-2"/>
</dbReference>
<dbReference type="InterPro" id="IPR036265">
    <property type="entry name" value="HIT-like_sf"/>
</dbReference>
<dbReference type="PANTHER" id="PTHR12072">
    <property type="entry name" value="CWF19, CELL CYCLE CONTROL PROTEIN"/>
    <property type="match status" value="1"/>
</dbReference>
<dbReference type="PANTHER" id="PTHR12072:SF5">
    <property type="entry name" value="CWF19-LIKE PROTEIN 2"/>
    <property type="match status" value="1"/>
</dbReference>
<dbReference type="Pfam" id="PF04677">
    <property type="entry name" value="CwfJ_C_1"/>
    <property type="match status" value="1"/>
</dbReference>
<dbReference type="Pfam" id="PF04676">
    <property type="entry name" value="CwfJ_C_2"/>
    <property type="match status" value="1"/>
</dbReference>
<dbReference type="SUPFAM" id="SSF54197">
    <property type="entry name" value="HIT-like"/>
    <property type="match status" value="1"/>
</dbReference>
<evidence type="ECO:0000255" key="1"/>
<evidence type="ECO:0000256" key="2">
    <source>
        <dbReference type="SAM" id="MobiDB-lite"/>
    </source>
</evidence>
<evidence type="ECO:0000305" key="3"/>
<keyword id="KW-0175">Coiled coil</keyword>
<keyword id="KW-1185">Reference proteome</keyword>
<organism>
    <name type="scientific">Danio rerio</name>
    <name type="common">Zebrafish</name>
    <name type="synonym">Brachydanio rerio</name>
    <dbReference type="NCBI Taxonomy" id="7955"/>
    <lineage>
        <taxon>Eukaryota</taxon>
        <taxon>Metazoa</taxon>
        <taxon>Chordata</taxon>
        <taxon>Craniata</taxon>
        <taxon>Vertebrata</taxon>
        <taxon>Euteleostomi</taxon>
        <taxon>Actinopterygii</taxon>
        <taxon>Neopterygii</taxon>
        <taxon>Teleostei</taxon>
        <taxon>Ostariophysi</taxon>
        <taxon>Cypriniformes</taxon>
        <taxon>Danionidae</taxon>
        <taxon>Danioninae</taxon>
        <taxon>Danio</taxon>
    </lineage>
</organism>
<reference key="1">
    <citation type="journal article" date="2004" name="Proc. Natl. Acad. Sci. U.S.A.">
        <title>Identification of 315 genes essential for early zebrafish development.</title>
        <authorList>
            <person name="Amsterdam A."/>
            <person name="Nissen R.M."/>
            <person name="Sun Z."/>
            <person name="Swindell E.C."/>
            <person name="Farrington S."/>
            <person name="Hopkins N."/>
        </authorList>
    </citation>
    <scope>NUCLEOTIDE SEQUENCE [LARGE SCALE MRNA]</scope>
    <source>
        <tissue>Embryo</tissue>
    </source>
</reference>